<accession>Q5NQ45</accession>
<evidence type="ECO:0000255" key="1">
    <source>
        <dbReference type="HAMAP-Rule" id="MF_01341"/>
    </source>
</evidence>
<evidence type="ECO:0000256" key="2">
    <source>
        <dbReference type="SAM" id="MobiDB-lite"/>
    </source>
</evidence>
<evidence type="ECO:0000305" key="3"/>
<proteinExistence type="inferred from homology"/>
<feature type="chain" id="PRO_0000104857" description="Large ribosomal subunit protein uL15">
    <location>
        <begin position="1"/>
        <end position="163"/>
    </location>
</feature>
<feature type="region of interest" description="Disordered" evidence="2">
    <location>
        <begin position="27"/>
        <end position="46"/>
    </location>
</feature>
<feature type="compositionally biased region" description="Gly residues" evidence="2">
    <location>
        <begin position="27"/>
        <end position="37"/>
    </location>
</feature>
<reference key="1">
    <citation type="journal article" date="2005" name="Nat. Biotechnol.">
        <title>The genome sequence of the ethanologenic bacterium Zymomonas mobilis ZM4.</title>
        <authorList>
            <person name="Seo J.-S."/>
            <person name="Chong H."/>
            <person name="Park H.S."/>
            <person name="Yoon K.-O."/>
            <person name="Jung C."/>
            <person name="Kim J.J."/>
            <person name="Hong J.H."/>
            <person name="Kim H."/>
            <person name="Kim J.-H."/>
            <person name="Kil J.-I."/>
            <person name="Park C.J."/>
            <person name="Oh H.-M."/>
            <person name="Lee J.-S."/>
            <person name="Jin S.-J."/>
            <person name="Um H.-W."/>
            <person name="Lee H.-J."/>
            <person name="Oh S.-J."/>
            <person name="Kim J.Y."/>
            <person name="Kang H.L."/>
            <person name="Lee S.Y."/>
            <person name="Lee K.J."/>
            <person name="Kang H.S."/>
        </authorList>
    </citation>
    <scope>NUCLEOTIDE SEQUENCE [LARGE SCALE GENOMIC DNA]</scope>
    <source>
        <strain>ATCC 31821 / ZM4 / CP4</strain>
    </source>
</reference>
<keyword id="KW-1185">Reference proteome</keyword>
<keyword id="KW-0687">Ribonucleoprotein</keyword>
<keyword id="KW-0689">Ribosomal protein</keyword>
<keyword id="KW-0694">RNA-binding</keyword>
<keyword id="KW-0699">rRNA-binding</keyword>
<comment type="function">
    <text evidence="1">Binds to the 23S rRNA.</text>
</comment>
<comment type="subunit">
    <text evidence="1">Part of the 50S ribosomal subunit.</text>
</comment>
<comment type="similarity">
    <text evidence="1">Belongs to the universal ribosomal protein uL15 family.</text>
</comment>
<gene>
    <name evidence="1" type="primary">rplO</name>
    <name type="ordered locus">ZMO0536</name>
</gene>
<protein>
    <recommendedName>
        <fullName evidence="1">Large ribosomal subunit protein uL15</fullName>
    </recommendedName>
    <alternativeName>
        <fullName evidence="3">50S ribosomal protein L15</fullName>
    </alternativeName>
</protein>
<dbReference type="EMBL" id="AE008692">
    <property type="protein sequence ID" value="AAV89160.1"/>
    <property type="molecule type" value="Genomic_DNA"/>
</dbReference>
<dbReference type="RefSeq" id="WP_011240442.1">
    <property type="nucleotide sequence ID" value="NZ_CP035711.1"/>
</dbReference>
<dbReference type="SMR" id="Q5NQ45"/>
<dbReference type="STRING" id="264203.ZMO0536"/>
<dbReference type="GeneID" id="79904273"/>
<dbReference type="KEGG" id="zmo:ZMO0536"/>
<dbReference type="eggNOG" id="COG0200">
    <property type="taxonomic scope" value="Bacteria"/>
</dbReference>
<dbReference type="HOGENOM" id="CLU_055188_4_0_5"/>
<dbReference type="Proteomes" id="UP000001173">
    <property type="component" value="Chromosome"/>
</dbReference>
<dbReference type="GO" id="GO:0022625">
    <property type="term" value="C:cytosolic large ribosomal subunit"/>
    <property type="evidence" value="ECO:0007669"/>
    <property type="project" value="TreeGrafter"/>
</dbReference>
<dbReference type="GO" id="GO:0019843">
    <property type="term" value="F:rRNA binding"/>
    <property type="evidence" value="ECO:0007669"/>
    <property type="project" value="UniProtKB-UniRule"/>
</dbReference>
<dbReference type="GO" id="GO:0003735">
    <property type="term" value="F:structural constituent of ribosome"/>
    <property type="evidence" value="ECO:0007669"/>
    <property type="project" value="InterPro"/>
</dbReference>
<dbReference type="GO" id="GO:0006412">
    <property type="term" value="P:translation"/>
    <property type="evidence" value="ECO:0007669"/>
    <property type="project" value="UniProtKB-UniRule"/>
</dbReference>
<dbReference type="Gene3D" id="3.100.10.10">
    <property type="match status" value="1"/>
</dbReference>
<dbReference type="HAMAP" id="MF_01341">
    <property type="entry name" value="Ribosomal_uL15"/>
    <property type="match status" value="1"/>
</dbReference>
<dbReference type="InterPro" id="IPR030878">
    <property type="entry name" value="Ribosomal_uL15"/>
</dbReference>
<dbReference type="InterPro" id="IPR021131">
    <property type="entry name" value="Ribosomal_uL15/eL18"/>
</dbReference>
<dbReference type="InterPro" id="IPR036227">
    <property type="entry name" value="Ribosomal_uL15/eL18_sf"/>
</dbReference>
<dbReference type="InterPro" id="IPR005749">
    <property type="entry name" value="Ribosomal_uL15_bac-type"/>
</dbReference>
<dbReference type="InterPro" id="IPR001196">
    <property type="entry name" value="Ribosomal_uL15_CS"/>
</dbReference>
<dbReference type="NCBIfam" id="TIGR01071">
    <property type="entry name" value="rplO_bact"/>
    <property type="match status" value="1"/>
</dbReference>
<dbReference type="PANTHER" id="PTHR12934">
    <property type="entry name" value="50S RIBOSOMAL PROTEIN L15"/>
    <property type="match status" value="1"/>
</dbReference>
<dbReference type="PANTHER" id="PTHR12934:SF11">
    <property type="entry name" value="LARGE RIBOSOMAL SUBUNIT PROTEIN UL15M"/>
    <property type="match status" value="1"/>
</dbReference>
<dbReference type="Pfam" id="PF00828">
    <property type="entry name" value="Ribosomal_L27A"/>
    <property type="match status" value="1"/>
</dbReference>
<dbReference type="SUPFAM" id="SSF52080">
    <property type="entry name" value="Ribosomal proteins L15p and L18e"/>
    <property type="match status" value="1"/>
</dbReference>
<dbReference type="PROSITE" id="PS00475">
    <property type="entry name" value="RIBOSOMAL_L15"/>
    <property type="match status" value="1"/>
</dbReference>
<sequence length="163" mass="17063">MSFKLNSLKDNAGSRVGRVRVGRGIGSGLGKTAGRGQKGQKSRSGVSINGFAGGQMPIYMRLPKRGFNNVFSKDYAEVNLGVVQKLIESGRLDAKNPIDHQALKAAGVARGGKDGVRILGKGEIASKVAFKVAGISKAAREAVEKAGGSVEIIARRNVEKTDA</sequence>
<organism>
    <name type="scientific">Zymomonas mobilis subsp. mobilis (strain ATCC 31821 / ZM4 / CP4)</name>
    <dbReference type="NCBI Taxonomy" id="264203"/>
    <lineage>
        <taxon>Bacteria</taxon>
        <taxon>Pseudomonadati</taxon>
        <taxon>Pseudomonadota</taxon>
        <taxon>Alphaproteobacteria</taxon>
        <taxon>Sphingomonadales</taxon>
        <taxon>Zymomonadaceae</taxon>
        <taxon>Zymomonas</taxon>
    </lineage>
</organism>
<name>RL15_ZYMMO</name>